<evidence type="ECO:0000255" key="1">
    <source>
        <dbReference type="HAMAP-Rule" id="MF_03014"/>
    </source>
</evidence>
<evidence type="ECO:0000303" key="2">
    <source ref="2"/>
</evidence>
<feature type="chain" id="PRO_0000361878" description="Kynurenine formamidase">
    <location>
        <begin position="1"/>
        <end position="293"/>
    </location>
</feature>
<feature type="short sequence motif" description="HGGXW">
    <location>
        <begin position="84"/>
        <end position="88"/>
    </location>
</feature>
<feature type="active site" description="Nucleophile" evidence="1">
    <location>
        <position position="153"/>
    </location>
</feature>
<feature type="active site" evidence="1">
    <location>
        <position position="236"/>
    </location>
</feature>
<feature type="active site" evidence="1">
    <location>
        <position position="268"/>
    </location>
</feature>
<feature type="splice variant" id="VSP_036236" description="In isoform 2." evidence="2">
    <location>
        <begin position="1"/>
        <end position="24"/>
    </location>
</feature>
<accession>Q566U4</accession>
<comment type="function">
    <text evidence="1">Catalyzes the hydrolysis of N-formyl-L-kynurenine to L-kynurenine, the second step in the kynurenine pathway of tryptophan degradation. Kynurenine may be further oxidized to nicotinic acid, NAD(H) and NADP(H). Required for elimination of toxic metabolites.</text>
</comment>
<comment type="catalytic activity">
    <reaction evidence="1">
        <text>N-formyl-L-kynurenine + H2O = L-kynurenine + formate + H(+)</text>
        <dbReference type="Rhea" id="RHEA:13009"/>
        <dbReference type="ChEBI" id="CHEBI:15377"/>
        <dbReference type="ChEBI" id="CHEBI:15378"/>
        <dbReference type="ChEBI" id="CHEBI:15740"/>
        <dbReference type="ChEBI" id="CHEBI:57959"/>
        <dbReference type="ChEBI" id="CHEBI:58629"/>
        <dbReference type="EC" id="3.5.1.9"/>
    </reaction>
</comment>
<comment type="pathway">
    <text evidence="1">Amino-acid degradation; L-tryptophan degradation via kynurenine pathway; L-kynurenine from L-tryptophan: step 2/2.</text>
</comment>
<comment type="subunit">
    <text evidence="1">Homodimer.</text>
</comment>
<comment type="subcellular location">
    <subcellularLocation>
        <location evidence="1">Cytoplasm</location>
        <location evidence="1">Cytosol</location>
    </subcellularLocation>
    <subcellularLocation>
        <location evidence="1">Nucleus</location>
    </subcellularLocation>
</comment>
<comment type="alternative products">
    <event type="alternative splicing"/>
    <isoform>
        <id>Q566U4-1</id>
        <name>1</name>
        <sequence type="displayed"/>
    </isoform>
    <isoform>
        <id>Q566U4-2</id>
        <name>2</name>
        <sequence type="described" ref="VSP_036236"/>
    </isoform>
</comment>
<comment type="domain">
    <text evidence="1">The main chain amide nitrogen atoms of the second glycine and its adjacent residue in the HGGXW motif define the oxyanion hole, and stabilize the oxyanion that forms during the nucleophilic attack by the catalytic serine during substrate cleavage.</text>
</comment>
<comment type="similarity">
    <text evidence="1">Belongs to the kynurenine formamidase family.</text>
</comment>
<gene>
    <name type="primary">afmid</name>
    <name type="ORF">zgc:112472</name>
</gene>
<reference key="1">
    <citation type="journal article" date="2013" name="Nature">
        <title>The zebrafish reference genome sequence and its relationship to the human genome.</title>
        <authorList>
            <person name="Howe K."/>
            <person name="Clark M.D."/>
            <person name="Torroja C.F."/>
            <person name="Torrance J."/>
            <person name="Berthelot C."/>
            <person name="Muffato M."/>
            <person name="Collins J.E."/>
            <person name="Humphray S."/>
            <person name="McLaren K."/>
            <person name="Matthews L."/>
            <person name="McLaren S."/>
            <person name="Sealy I."/>
            <person name="Caccamo M."/>
            <person name="Churcher C."/>
            <person name="Scott C."/>
            <person name="Barrett J.C."/>
            <person name="Koch R."/>
            <person name="Rauch G.J."/>
            <person name="White S."/>
            <person name="Chow W."/>
            <person name="Kilian B."/>
            <person name="Quintais L.T."/>
            <person name="Guerra-Assuncao J.A."/>
            <person name="Zhou Y."/>
            <person name="Gu Y."/>
            <person name="Yen J."/>
            <person name="Vogel J.H."/>
            <person name="Eyre T."/>
            <person name="Redmond S."/>
            <person name="Banerjee R."/>
            <person name="Chi J."/>
            <person name="Fu B."/>
            <person name="Langley E."/>
            <person name="Maguire S.F."/>
            <person name="Laird G.K."/>
            <person name="Lloyd D."/>
            <person name="Kenyon E."/>
            <person name="Donaldson S."/>
            <person name="Sehra H."/>
            <person name="Almeida-King J."/>
            <person name="Loveland J."/>
            <person name="Trevanion S."/>
            <person name="Jones M."/>
            <person name="Quail M."/>
            <person name="Willey D."/>
            <person name="Hunt A."/>
            <person name="Burton J."/>
            <person name="Sims S."/>
            <person name="McLay K."/>
            <person name="Plumb B."/>
            <person name="Davis J."/>
            <person name="Clee C."/>
            <person name="Oliver K."/>
            <person name="Clark R."/>
            <person name="Riddle C."/>
            <person name="Elliot D."/>
            <person name="Threadgold G."/>
            <person name="Harden G."/>
            <person name="Ware D."/>
            <person name="Begum S."/>
            <person name="Mortimore B."/>
            <person name="Kerry G."/>
            <person name="Heath P."/>
            <person name="Phillimore B."/>
            <person name="Tracey A."/>
            <person name="Corby N."/>
            <person name="Dunn M."/>
            <person name="Johnson C."/>
            <person name="Wood J."/>
            <person name="Clark S."/>
            <person name="Pelan S."/>
            <person name="Griffiths G."/>
            <person name="Smith M."/>
            <person name="Glithero R."/>
            <person name="Howden P."/>
            <person name="Barker N."/>
            <person name="Lloyd C."/>
            <person name="Stevens C."/>
            <person name="Harley J."/>
            <person name="Holt K."/>
            <person name="Panagiotidis G."/>
            <person name="Lovell J."/>
            <person name="Beasley H."/>
            <person name="Henderson C."/>
            <person name="Gordon D."/>
            <person name="Auger K."/>
            <person name="Wright D."/>
            <person name="Collins J."/>
            <person name="Raisen C."/>
            <person name="Dyer L."/>
            <person name="Leung K."/>
            <person name="Robertson L."/>
            <person name="Ambridge K."/>
            <person name="Leongamornlert D."/>
            <person name="McGuire S."/>
            <person name="Gilderthorp R."/>
            <person name="Griffiths C."/>
            <person name="Manthravadi D."/>
            <person name="Nichol S."/>
            <person name="Barker G."/>
            <person name="Whitehead S."/>
            <person name="Kay M."/>
            <person name="Brown J."/>
            <person name="Murnane C."/>
            <person name="Gray E."/>
            <person name="Humphries M."/>
            <person name="Sycamore N."/>
            <person name="Barker D."/>
            <person name="Saunders D."/>
            <person name="Wallis J."/>
            <person name="Babbage A."/>
            <person name="Hammond S."/>
            <person name="Mashreghi-Mohammadi M."/>
            <person name="Barr L."/>
            <person name="Martin S."/>
            <person name="Wray P."/>
            <person name="Ellington A."/>
            <person name="Matthews N."/>
            <person name="Ellwood M."/>
            <person name="Woodmansey R."/>
            <person name="Clark G."/>
            <person name="Cooper J."/>
            <person name="Tromans A."/>
            <person name="Grafham D."/>
            <person name="Skuce C."/>
            <person name="Pandian R."/>
            <person name="Andrews R."/>
            <person name="Harrison E."/>
            <person name="Kimberley A."/>
            <person name="Garnett J."/>
            <person name="Fosker N."/>
            <person name="Hall R."/>
            <person name="Garner P."/>
            <person name="Kelly D."/>
            <person name="Bird C."/>
            <person name="Palmer S."/>
            <person name="Gehring I."/>
            <person name="Berger A."/>
            <person name="Dooley C.M."/>
            <person name="Ersan-Urun Z."/>
            <person name="Eser C."/>
            <person name="Geiger H."/>
            <person name="Geisler M."/>
            <person name="Karotki L."/>
            <person name="Kirn A."/>
            <person name="Konantz J."/>
            <person name="Konantz M."/>
            <person name="Oberlander M."/>
            <person name="Rudolph-Geiger S."/>
            <person name="Teucke M."/>
            <person name="Lanz C."/>
            <person name="Raddatz G."/>
            <person name="Osoegawa K."/>
            <person name="Zhu B."/>
            <person name="Rapp A."/>
            <person name="Widaa S."/>
            <person name="Langford C."/>
            <person name="Yang F."/>
            <person name="Schuster S.C."/>
            <person name="Carter N.P."/>
            <person name="Harrow J."/>
            <person name="Ning Z."/>
            <person name="Herrero J."/>
            <person name="Searle S.M."/>
            <person name="Enright A."/>
            <person name="Geisler R."/>
            <person name="Plasterk R.H."/>
            <person name="Lee C."/>
            <person name="Westerfield M."/>
            <person name="de Jong P.J."/>
            <person name="Zon L.I."/>
            <person name="Postlethwait J.H."/>
            <person name="Nusslein-Volhard C."/>
            <person name="Hubbard T.J."/>
            <person name="Roest Crollius H."/>
            <person name="Rogers J."/>
            <person name="Stemple D.L."/>
        </authorList>
    </citation>
    <scope>NUCLEOTIDE SEQUENCE [LARGE SCALE GENOMIC DNA]</scope>
    <source>
        <strain>Tuebingen</strain>
    </source>
</reference>
<reference key="2">
    <citation type="submission" date="2005-04" db="EMBL/GenBank/DDBJ databases">
        <authorList>
            <consortium name="NIH - Zebrafish Gene Collection (ZGC) project"/>
        </authorList>
    </citation>
    <scope>NUCLEOTIDE SEQUENCE [LARGE SCALE MRNA] (ISOFORM 2)</scope>
    <source>
        <tissue>Olfactory epithelium</tissue>
    </source>
</reference>
<dbReference type="EC" id="3.5.1.9" evidence="1"/>
<dbReference type="EMBL" id="CR293511">
    <property type="status" value="NOT_ANNOTATED_CDS"/>
    <property type="molecule type" value="Genomic_DNA"/>
</dbReference>
<dbReference type="EMBL" id="BC093330">
    <property type="protein sequence ID" value="AAH93330.1"/>
    <property type="molecule type" value="mRNA"/>
</dbReference>
<dbReference type="RefSeq" id="NP_001017677.1">
    <molecule id="Q566U4-2"/>
    <property type="nucleotide sequence ID" value="NM_001017677.1"/>
</dbReference>
<dbReference type="SMR" id="Q566U4"/>
<dbReference type="FunCoup" id="Q566U4">
    <property type="interactions" value="351"/>
</dbReference>
<dbReference type="STRING" id="7955.ENSDARP00000131858"/>
<dbReference type="ESTHER" id="danre-afmid">
    <property type="family name" value="Kynurenine-formamidase"/>
</dbReference>
<dbReference type="PaxDb" id="7955-ENSDARP00000108349"/>
<dbReference type="GeneID" id="550372"/>
<dbReference type="KEGG" id="dre:550372"/>
<dbReference type="AGR" id="ZFIN:ZDB-GENE-050417-166"/>
<dbReference type="CTD" id="125061"/>
<dbReference type="ZFIN" id="ZDB-GENE-050417-166">
    <property type="gene designation" value="afmid"/>
</dbReference>
<dbReference type="eggNOG" id="KOG4627">
    <property type="taxonomic scope" value="Eukaryota"/>
</dbReference>
<dbReference type="InParanoid" id="Q566U4"/>
<dbReference type="OrthoDB" id="433474at2759"/>
<dbReference type="PhylomeDB" id="Q566U4"/>
<dbReference type="UniPathway" id="UPA00333">
    <property type="reaction ID" value="UER00454"/>
</dbReference>
<dbReference type="PRO" id="PR:Q566U4"/>
<dbReference type="Proteomes" id="UP000000437">
    <property type="component" value="Chromosome 11"/>
</dbReference>
<dbReference type="GO" id="GO:0005737">
    <property type="term" value="C:cytoplasm"/>
    <property type="evidence" value="ECO:0000318"/>
    <property type="project" value="GO_Central"/>
</dbReference>
<dbReference type="GO" id="GO:0005829">
    <property type="term" value="C:cytosol"/>
    <property type="evidence" value="ECO:0007669"/>
    <property type="project" value="UniProtKB-SubCell"/>
</dbReference>
<dbReference type="GO" id="GO:0005634">
    <property type="term" value="C:nucleus"/>
    <property type="evidence" value="ECO:0007669"/>
    <property type="project" value="UniProtKB-SubCell"/>
</dbReference>
<dbReference type="GO" id="GO:0004061">
    <property type="term" value="F:arylformamidase activity"/>
    <property type="evidence" value="ECO:0007669"/>
    <property type="project" value="UniProtKB-UniRule"/>
</dbReference>
<dbReference type="GO" id="GO:0034354">
    <property type="term" value="P:'de novo' NAD biosynthetic process from L-tryptophan"/>
    <property type="evidence" value="ECO:0007669"/>
    <property type="project" value="UniProtKB-UniRule"/>
</dbReference>
<dbReference type="GO" id="GO:0019441">
    <property type="term" value="P:L-tryptophan catabolic process to kynurenine"/>
    <property type="evidence" value="ECO:0000318"/>
    <property type="project" value="GO_Central"/>
</dbReference>
<dbReference type="FunFam" id="3.40.50.1820:FF:000134">
    <property type="entry name" value="Kynurenine formamidase"/>
    <property type="match status" value="1"/>
</dbReference>
<dbReference type="Gene3D" id="3.40.50.1820">
    <property type="entry name" value="alpha/beta hydrolase"/>
    <property type="match status" value="1"/>
</dbReference>
<dbReference type="HAMAP" id="MF_03014">
    <property type="entry name" value="KFase"/>
    <property type="match status" value="1"/>
</dbReference>
<dbReference type="InterPro" id="IPR013094">
    <property type="entry name" value="AB_hydrolase_3"/>
</dbReference>
<dbReference type="InterPro" id="IPR029058">
    <property type="entry name" value="AB_hydrolase_fold"/>
</dbReference>
<dbReference type="InterPro" id="IPR050300">
    <property type="entry name" value="GDXG_lipolytic_enzyme"/>
</dbReference>
<dbReference type="InterPro" id="IPR027519">
    <property type="entry name" value="KFase_ver/fungi-typ"/>
</dbReference>
<dbReference type="PANTHER" id="PTHR48081">
    <property type="entry name" value="AB HYDROLASE SUPERFAMILY PROTEIN C4A8.06C"/>
    <property type="match status" value="1"/>
</dbReference>
<dbReference type="PANTHER" id="PTHR48081:SF33">
    <property type="entry name" value="KYNURENINE FORMAMIDASE"/>
    <property type="match status" value="1"/>
</dbReference>
<dbReference type="Pfam" id="PF07859">
    <property type="entry name" value="Abhydrolase_3"/>
    <property type="match status" value="1"/>
</dbReference>
<dbReference type="SUPFAM" id="SSF53474">
    <property type="entry name" value="alpha/beta-Hydrolases"/>
    <property type="match status" value="1"/>
</dbReference>
<proteinExistence type="evidence at transcript level"/>
<name>KFA_DANRE</name>
<organism>
    <name type="scientific">Danio rerio</name>
    <name type="common">Zebrafish</name>
    <name type="synonym">Brachydanio rerio</name>
    <dbReference type="NCBI Taxonomy" id="7955"/>
    <lineage>
        <taxon>Eukaryota</taxon>
        <taxon>Metazoa</taxon>
        <taxon>Chordata</taxon>
        <taxon>Craniata</taxon>
        <taxon>Vertebrata</taxon>
        <taxon>Euteleostomi</taxon>
        <taxon>Actinopterygii</taxon>
        <taxon>Neopterygii</taxon>
        <taxon>Teleostei</taxon>
        <taxon>Ostariophysi</taxon>
        <taxon>Cypriniformes</taxon>
        <taxon>Danionidae</taxon>
        <taxon>Danioninae</taxon>
        <taxon>Danio</taxon>
    </lineage>
</organism>
<protein>
    <recommendedName>
        <fullName evidence="1">Kynurenine formamidase</fullName>
        <shortName evidence="1">KFA</shortName>
        <shortName evidence="1">KFase</shortName>
        <ecNumber evidence="1">3.5.1.9</ecNumber>
    </recommendedName>
    <alternativeName>
        <fullName evidence="1">Arylformamidase</fullName>
    </alternativeName>
    <alternativeName>
        <fullName evidence="1">N-formylkynurenine formamidase</fullName>
        <shortName evidence="1">FKF</shortName>
    </alternativeName>
</protein>
<sequence length="293" mass="32412">MSDWKSMSKDELELQYSPSRWSPRMSADDVIRAHVSALKSGTERARSVTQTLMDVPYGEAEGEKLDVYLPSSSSPDVPLVIYFHGGYWQFLSKDESGFLAVPLVQKGAVVVAVGYSIAPKGDMDLMVSQVRRSVVSVIQQYSHISGLYLCGHSAGAHLAAMVLSTDWTQYDVSPKIKGAFLVSGIYDLQPILSTYVNEPLKMTEEVALRNSPSRFLSQLKVSSASCDITVAVAQNDSPEFRKQSEEYYKALESAGLKVSFEDVSETDHFSIIEQLVDENYLLTKLLLKMIGKS</sequence>
<keyword id="KW-0025">Alternative splicing</keyword>
<keyword id="KW-0963">Cytoplasm</keyword>
<keyword id="KW-0378">Hydrolase</keyword>
<keyword id="KW-0539">Nucleus</keyword>
<keyword id="KW-1185">Reference proteome</keyword>
<keyword id="KW-0823">Tryptophan catabolism</keyword>